<gene>
    <name evidence="1" type="primary">psbL</name>
</gene>
<comment type="function">
    <text evidence="1">One of the components of the core complex of photosystem II (PSII). PSII is a light-driven water:plastoquinone oxidoreductase that uses light energy to abstract electrons from H(2)O, generating O(2) and a proton gradient subsequently used for ATP formation. It consists of a core antenna complex that captures photons, and an electron transfer chain that converts photonic excitation into a charge separation. This subunit is found at the monomer-monomer interface and is required for correct PSII assembly and/or dimerization.</text>
</comment>
<comment type="subunit">
    <text evidence="1">PSII is composed of 1 copy each of membrane proteins PsbA, PsbB, PsbC, PsbD, PsbE, PsbF, PsbH, PsbI, PsbJ, PsbK, PsbL, PsbM, PsbT, PsbX, PsbY, PsbZ, Psb30/Ycf12, at least 3 peripheral proteins of the oxygen-evolving complex and a large number of cofactors. It forms dimeric complexes.</text>
</comment>
<comment type="subcellular location">
    <subcellularLocation>
        <location evidence="1">Plastid</location>
        <location evidence="1">Chloroplast thylakoid membrane</location>
        <topology evidence="1">Single-pass membrane protein</topology>
    </subcellularLocation>
</comment>
<comment type="similarity">
    <text evidence="1">Belongs to the PsbL family.</text>
</comment>
<dbReference type="EMBL" id="DQ422812">
    <property type="protein sequence ID" value="ABD62221.2"/>
    <property type="molecule type" value="Genomic_DNA"/>
</dbReference>
<dbReference type="RefSeq" id="YP_001019125.1">
    <property type="nucleotide sequence ID" value="NC_008822.1"/>
</dbReference>
<dbReference type="SMR" id="Q19V81"/>
<dbReference type="GeneID" id="4783271"/>
<dbReference type="GO" id="GO:0009535">
    <property type="term" value="C:chloroplast thylakoid membrane"/>
    <property type="evidence" value="ECO:0007669"/>
    <property type="project" value="UniProtKB-SubCell"/>
</dbReference>
<dbReference type="GO" id="GO:0009539">
    <property type="term" value="C:photosystem II reaction center"/>
    <property type="evidence" value="ECO:0007669"/>
    <property type="project" value="InterPro"/>
</dbReference>
<dbReference type="GO" id="GO:0015979">
    <property type="term" value="P:photosynthesis"/>
    <property type="evidence" value="ECO:0007669"/>
    <property type="project" value="UniProtKB-UniRule"/>
</dbReference>
<dbReference type="HAMAP" id="MF_01317">
    <property type="entry name" value="PSII_PsbL"/>
    <property type="match status" value="1"/>
</dbReference>
<dbReference type="InterPro" id="IPR003372">
    <property type="entry name" value="PSII_PsbL"/>
</dbReference>
<dbReference type="InterPro" id="IPR037266">
    <property type="entry name" value="PSII_PsbL_sf"/>
</dbReference>
<dbReference type="NCBIfam" id="NF001972">
    <property type="entry name" value="PRK00753.1"/>
    <property type="match status" value="1"/>
</dbReference>
<dbReference type="Pfam" id="PF02419">
    <property type="entry name" value="PsbL"/>
    <property type="match status" value="1"/>
</dbReference>
<dbReference type="SUPFAM" id="SSF161017">
    <property type="entry name" value="Photosystem II reaction center protein L, PsbL"/>
    <property type="match status" value="1"/>
</dbReference>
<name>PSBL_CHLAT</name>
<proteinExistence type="inferred from homology"/>
<protein>
    <recommendedName>
        <fullName evidence="1">Photosystem II reaction center protein L</fullName>
        <shortName evidence="1">PSII-L</shortName>
    </recommendedName>
</protein>
<sequence>MTEPNPNKQTVELNRTSLYWGLLLIFVLAILFSNYIFN</sequence>
<accession>Q19V81</accession>
<keyword id="KW-0150">Chloroplast</keyword>
<keyword id="KW-0472">Membrane</keyword>
<keyword id="KW-0602">Photosynthesis</keyword>
<keyword id="KW-0604">Photosystem II</keyword>
<keyword id="KW-0934">Plastid</keyword>
<keyword id="KW-0674">Reaction center</keyword>
<keyword id="KW-0793">Thylakoid</keyword>
<keyword id="KW-0812">Transmembrane</keyword>
<keyword id="KW-1133">Transmembrane helix</keyword>
<geneLocation type="chloroplast"/>
<reference key="1">
    <citation type="journal article" date="2007" name="BMC Biol.">
        <title>A clade uniting the green algae Mesostigma viride and Chlorokybus atmophyticus represents the deepest branch of the Streptophyta in chloroplast genome-based phylogenies.</title>
        <authorList>
            <person name="Lemieux C."/>
            <person name="Otis C."/>
            <person name="Turmel M."/>
        </authorList>
    </citation>
    <scope>NUCLEOTIDE SEQUENCE [LARGE SCALE GENOMIC DNA]</scope>
    <source>
        <strain>SAG 48.80</strain>
    </source>
</reference>
<organism>
    <name type="scientific">Chlorokybus atmophyticus</name>
    <name type="common">Soil alga</name>
    <dbReference type="NCBI Taxonomy" id="3144"/>
    <lineage>
        <taxon>Eukaryota</taxon>
        <taxon>Viridiplantae</taxon>
        <taxon>Streptophyta</taxon>
        <taxon>Chlorokybophyceae</taxon>
        <taxon>Chlorokybales</taxon>
        <taxon>Chlorokybaceae</taxon>
        <taxon>Chlorokybus</taxon>
    </lineage>
</organism>
<evidence type="ECO:0000255" key="1">
    <source>
        <dbReference type="HAMAP-Rule" id="MF_01317"/>
    </source>
</evidence>
<feature type="chain" id="PRO_0000306227" description="Photosystem II reaction center protein L">
    <location>
        <begin position="1"/>
        <end position="38"/>
    </location>
</feature>
<feature type="transmembrane region" description="Helical" evidence="1">
    <location>
        <begin position="17"/>
        <end position="37"/>
    </location>
</feature>